<gene>
    <name evidence="1" type="primary">infA</name>
    <name type="ordered locus">BOV_0267</name>
</gene>
<feature type="chain" id="PRO_0000338773" description="Translation initiation factor IF-1">
    <location>
        <begin position="1"/>
        <end position="72"/>
    </location>
</feature>
<feature type="domain" description="S1-like" evidence="1">
    <location>
        <begin position="1"/>
        <end position="72"/>
    </location>
</feature>
<name>IF1_BRUO2</name>
<keyword id="KW-0963">Cytoplasm</keyword>
<keyword id="KW-0396">Initiation factor</keyword>
<keyword id="KW-0648">Protein biosynthesis</keyword>
<keyword id="KW-0694">RNA-binding</keyword>
<keyword id="KW-0699">rRNA-binding</keyword>
<evidence type="ECO:0000255" key="1">
    <source>
        <dbReference type="HAMAP-Rule" id="MF_00075"/>
    </source>
</evidence>
<evidence type="ECO:0000305" key="2"/>
<reference key="1">
    <citation type="journal article" date="2009" name="PLoS ONE">
        <title>Genome degradation in Brucella ovis corresponds with narrowing of its host range and tissue tropism.</title>
        <authorList>
            <person name="Tsolis R.M."/>
            <person name="Seshadri R."/>
            <person name="Santos R.L."/>
            <person name="Sangari F.J."/>
            <person name="Lobo J.M."/>
            <person name="de Jong M.F."/>
            <person name="Ren Q."/>
            <person name="Myers G."/>
            <person name="Brinkac L.M."/>
            <person name="Nelson W.C."/>
            <person name="Deboy R.T."/>
            <person name="Angiuoli S."/>
            <person name="Khouri H."/>
            <person name="Dimitrov G."/>
            <person name="Robinson J.R."/>
            <person name="Mulligan S."/>
            <person name="Walker R.L."/>
            <person name="Elzer P.E."/>
            <person name="Hassan K.A."/>
            <person name="Paulsen I.T."/>
        </authorList>
    </citation>
    <scope>NUCLEOTIDE SEQUENCE [LARGE SCALE GENOMIC DNA]</scope>
    <source>
        <strain>ATCC 25840 / 63/290 / NCTC 10512</strain>
    </source>
</reference>
<protein>
    <recommendedName>
        <fullName evidence="1">Translation initiation factor IF-1</fullName>
    </recommendedName>
</protein>
<proteinExistence type="inferred from homology"/>
<sequence length="72" mass="8372">MAKEEVLEFPGVVTELLPNAMFRVKLENEHEIIAHTAGRMRKNRIRVLAGDKVLVEMTPYDLTKGRITYRFK</sequence>
<comment type="function">
    <text evidence="1">One of the essential components for the initiation of protein synthesis. Stabilizes the binding of IF-2 and IF-3 on the 30S subunit to which N-formylmethionyl-tRNA(fMet) subsequently binds. Helps modulate mRNA selection, yielding the 30S pre-initiation complex (PIC). Upon addition of the 50S ribosomal subunit IF-1, IF-2 and IF-3 are released leaving the mature 70S translation initiation complex.</text>
</comment>
<comment type="subunit">
    <text evidence="1">Component of the 30S ribosomal translation pre-initiation complex which assembles on the 30S ribosome in the order IF-2 and IF-3, IF-1 and N-formylmethionyl-tRNA(fMet); mRNA recruitment can occur at any time during PIC assembly.</text>
</comment>
<comment type="subcellular location">
    <subcellularLocation>
        <location evidence="1">Cytoplasm</location>
    </subcellularLocation>
</comment>
<comment type="similarity">
    <text evidence="1">Belongs to the IF-1 family.</text>
</comment>
<comment type="sequence caution" evidence="2">
    <conflict type="erroneous initiation">
        <sequence resource="EMBL-CDS" id="ABQ61786"/>
    </conflict>
    <text>Extended N-terminus.</text>
</comment>
<dbReference type="EMBL" id="CP000708">
    <property type="protein sequence ID" value="ABQ61786.1"/>
    <property type="status" value="ALT_INIT"/>
    <property type="molecule type" value="Genomic_DNA"/>
</dbReference>
<dbReference type="RefSeq" id="WP_002965531.1">
    <property type="nucleotide sequence ID" value="NC_009505.1"/>
</dbReference>
<dbReference type="SMR" id="A5VNK0"/>
<dbReference type="GeneID" id="97534350"/>
<dbReference type="KEGG" id="bov:BOV_0267"/>
<dbReference type="HOGENOM" id="CLU_151267_0_2_5"/>
<dbReference type="Proteomes" id="UP000006383">
    <property type="component" value="Chromosome I"/>
</dbReference>
<dbReference type="GO" id="GO:0005829">
    <property type="term" value="C:cytosol"/>
    <property type="evidence" value="ECO:0007669"/>
    <property type="project" value="TreeGrafter"/>
</dbReference>
<dbReference type="GO" id="GO:0043022">
    <property type="term" value="F:ribosome binding"/>
    <property type="evidence" value="ECO:0007669"/>
    <property type="project" value="UniProtKB-UniRule"/>
</dbReference>
<dbReference type="GO" id="GO:0019843">
    <property type="term" value="F:rRNA binding"/>
    <property type="evidence" value="ECO:0007669"/>
    <property type="project" value="UniProtKB-UniRule"/>
</dbReference>
<dbReference type="GO" id="GO:0003743">
    <property type="term" value="F:translation initiation factor activity"/>
    <property type="evidence" value="ECO:0007669"/>
    <property type="project" value="UniProtKB-UniRule"/>
</dbReference>
<dbReference type="CDD" id="cd04451">
    <property type="entry name" value="S1_IF1"/>
    <property type="match status" value="1"/>
</dbReference>
<dbReference type="FunFam" id="2.40.50.140:FF:000002">
    <property type="entry name" value="Translation initiation factor IF-1"/>
    <property type="match status" value="1"/>
</dbReference>
<dbReference type="Gene3D" id="2.40.50.140">
    <property type="entry name" value="Nucleic acid-binding proteins"/>
    <property type="match status" value="1"/>
</dbReference>
<dbReference type="HAMAP" id="MF_00075">
    <property type="entry name" value="IF_1"/>
    <property type="match status" value="1"/>
</dbReference>
<dbReference type="InterPro" id="IPR012340">
    <property type="entry name" value="NA-bd_OB-fold"/>
</dbReference>
<dbReference type="InterPro" id="IPR006196">
    <property type="entry name" value="RNA-binding_domain_S1_IF1"/>
</dbReference>
<dbReference type="InterPro" id="IPR003029">
    <property type="entry name" value="S1_domain"/>
</dbReference>
<dbReference type="InterPro" id="IPR004368">
    <property type="entry name" value="TIF_IF1"/>
</dbReference>
<dbReference type="NCBIfam" id="TIGR00008">
    <property type="entry name" value="infA"/>
    <property type="match status" value="1"/>
</dbReference>
<dbReference type="PANTHER" id="PTHR33370">
    <property type="entry name" value="TRANSLATION INITIATION FACTOR IF-1, CHLOROPLASTIC"/>
    <property type="match status" value="1"/>
</dbReference>
<dbReference type="PANTHER" id="PTHR33370:SF1">
    <property type="entry name" value="TRANSLATION INITIATION FACTOR IF-1, CHLOROPLASTIC"/>
    <property type="match status" value="1"/>
</dbReference>
<dbReference type="Pfam" id="PF01176">
    <property type="entry name" value="eIF-1a"/>
    <property type="match status" value="1"/>
</dbReference>
<dbReference type="SMART" id="SM00316">
    <property type="entry name" value="S1"/>
    <property type="match status" value="1"/>
</dbReference>
<dbReference type="SUPFAM" id="SSF50249">
    <property type="entry name" value="Nucleic acid-binding proteins"/>
    <property type="match status" value="1"/>
</dbReference>
<dbReference type="PROSITE" id="PS50832">
    <property type="entry name" value="S1_IF1_TYPE"/>
    <property type="match status" value="1"/>
</dbReference>
<accession>A5VNK0</accession>
<organism>
    <name type="scientific">Brucella ovis (strain ATCC 25840 / 63/290 / NCTC 10512)</name>
    <dbReference type="NCBI Taxonomy" id="444178"/>
    <lineage>
        <taxon>Bacteria</taxon>
        <taxon>Pseudomonadati</taxon>
        <taxon>Pseudomonadota</taxon>
        <taxon>Alphaproteobacteria</taxon>
        <taxon>Hyphomicrobiales</taxon>
        <taxon>Brucellaceae</taxon>
        <taxon>Brucella/Ochrobactrum group</taxon>
        <taxon>Brucella</taxon>
    </lineage>
</organism>